<protein>
    <recommendedName>
        <fullName evidence="1">Small ribosomal subunit protein uS13</fullName>
    </recommendedName>
    <alternativeName>
        <fullName evidence="3">30S ribosomal protein S13</fullName>
    </alternativeName>
</protein>
<dbReference type="EMBL" id="CP000235">
    <property type="protein sequence ID" value="ABD43726.1"/>
    <property type="molecule type" value="Genomic_DNA"/>
</dbReference>
<dbReference type="RefSeq" id="WP_011450436.1">
    <property type="nucleotide sequence ID" value="NC_007797.1"/>
</dbReference>
<dbReference type="SMR" id="Q2GL38"/>
<dbReference type="STRING" id="212042.APH_0301"/>
<dbReference type="PaxDb" id="212042-APH_0301"/>
<dbReference type="EnsemblBacteria" id="ABD43726">
    <property type="protein sequence ID" value="ABD43726"/>
    <property type="gene ID" value="APH_0301"/>
</dbReference>
<dbReference type="GeneID" id="92747502"/>
<dbReference type="KEGG" id="aph:APH_0301"/>
<dbReference type="eggNOG" id="COG0099">
    <property type="taxonomic scope" value="Bacteria"/>
</dbReference>
<dbReference type="HOGENOM" id="CLU_103849_1_2_5"/>
<dbReference type="Proteomes" id="UP000001943">
    <property type="component" value="Chromosome"/>
</dbReference>
<dbReference type="GO" id="GO:0005829">
    <property type="term" value="C:cytosol"/>
    <property type="evidence" value="ECO:0007669"/>
    <property type="project" value="TreeGrafter"/>
</dbReference>
<dbReference type="GO" id="GO:0015935">
    <property type="term" value="C:small ribosomal subunit"/>
    <property type="evidence" value="ECO:0007669"/>
    <property type="project" value="TreeGrafter"/>
</dbReference>
<dbReference type="GO" id="GO:0019843">
    <property type="term" value="F:rRNA binding"/>
    <property type="evidence" value="ECO:0007669"/>
    <property type="project" value="UniProtKB-UniRule"/>
</dbReference>
<dbReference type="GO" id="GO:0003735">
    <property type="term" value="F:structural constituent of ribosome"/>
    <property type="evidence" value="ECO:0007669"/>
    <property type="project" value="InterPro"/>
</dbReference>
<dbReference type="GO" id="GO:0000049">
    <property type="term" value="F:tRNA binding"/>
    <property type="evidence" value="ECO:0007669"/>
    <property type="project" value="UniProtKB-UniRule"/>
</dbReference>
<dbReference type="GO" id="GO:0006412">
    <property type="term" value="P:translation"/>
    <property type="evidence" value="ECO:0007669"/>
    <property type="project" value="UniProtKB-UniRule"/>
</dbReference>
<dbReference type="FunFam" id="1.10.8.50:FF:000001">
    <property type="entry name" value="30S ribosomal protein S13"/>
    <property type="match status" value="1"/>
</dbReference>
<dbReference type="FunFam" id="4.10.910.10:FF:000001">
    <property type="entry name" value="30S ribosomal protein S13"/>
    <property type="match status" value="1"/>
</dbReference>
<dbReference type="Gene3D" id="1.10.8.50">
    <property type="match status" value="1"/>
</dbReference>
<dbReference type="Gene3D" id="4.10.910.10">
    <property type="entry name" value="30s ribosomal protein s13, domain 2"/>
    <property type="match status" value="1"/>
</dbReference>
<dbReference type="HAMAP" id="MF_01315">
    <property type="entry name" value="Ribosomal_uS13"/>
    <property type="match status" value="1"/>
</dbReference>
<dbReference type="InterPro" id="IPR027437">
    <property type="entry name" value="Rbsml_uS13_C"/>
</dbReference>
<dbReference type="InterPro" id="IPR001892">
    <property type="entry name" value="Ribosomal_uS13"/>
</dbReference>
<dbReference type="InterPro" id="IPR010979">
    <property type="entry name" value="Ribosomal_uS13-like_H2TH"/>
</dbReference>
<dbReference type="InterPro" id="IPR019980">
    <property type="entry name" value="Ribosomal_uS13_bac-type"/>
</dbReference>
<dbReference type="InterPro" id="IPR018269">
    <property type="entry name" value="Ribosomal_uS13_CS"/>
</dbReference>
<dbReference type="NCBIfam" id="TIGR03631">
    <property type="entry name" value="uS13_bact"/>
    <property type="match status" value="1"/>
</dbReference>
<dbReference type="PANTHER" id="PTHR10871">
    <property type="entry name" value="30S RIBOSOMAL PROTEIN S13/40S RIBOSOMAL PROTEIN S18"/>
    <property type="match status" value="1"/>
</dbReference>
<dbReference type="PANTHER" id="PTHR10871:SF1">
    <property type="entry name" value="SMALL RIBOSOMAL SUBUNIT PROTEIN US13M"/>
    <property type="match status" value="1"/>
</dbReference>
<dbReference type="Pfam" id="PF00416">
    <property type="entry name" value="Ribosomal_S13"/>
    <property type="match status" value="1"/>
</dbReference>
<dbReference type="PIRSF" id="PIRSF002134">
    <property type="entry name" value="Ribosomal_S13"/>
    <property type="match status" value="1"/>
</dbReference>
<dbReference type="SUPFAM" id="SSF46946">
    <property type="entry name" value="S13-like H2TH domain"/>
    <property type="match status" value="1"/>
</dbReference>
<dbReference type="PROSITE" id="PS00646">
    <property type="entry name" value="RIBOSOMAL_S13_1"/>
    <property type="match status" value="1"/>
</dbReference>
<dbReference type="PROSITE" id="PS50159">
    <property type="entry name" value="RIBOSOMAL_S13_2"/>
    <property type="match status" value="1"/>
</dbReference>
<gene>
    <name evidence="1" type="primary">rpsM</name>
    <name type="ordered locus">APH_0301</name>
</gene>
<name>RS13_ANAPZ</name>
<proteinExistence type="inferred from homology"/>
<organism>
    <name type="scientific">Anaplasma phagocytophilum (strain HZ)</name>
    <dbReference type="NCBI Taxonomy" id="212042"/>
    <lineage>
        <taxon>Bacteria</taxon>
        <taxon>Pseudomonadati</taxon>
        <taxon>Pseudomonadota</taxon>
        <taxon>Alphaproteobacteria</taxon>
        <taxon>Rickettsiales</taxon>
        <taxon>Anaplasmataceae</taxon>
        <taxon>Anaplasma</taxon>
        <taxon>phagocytophilum group</taxon>
    </lineage>
</organism>
<evidence type="ECO:0000255" key="1">
    <source>
        <dbReference type="HAMAP-Rule" id="MF_01315"/>
    </source>
</evidence>
<evidence type="ECO:0000256" key="2">
    <source>
        <dbReference type="SAM" id="MobiDB-lite"/>
    </source>
</evidence>
<evidence type="ECO:0000305" key="3"/>
<reference key="1">
    <citation type="journal article" date="2006" name="PLoS Genet.">
        <title>Comparative genomics of emerging human ehrlichiosis agents.</title>
        <authorList>
            <person name="Dunning Hotopp J.C."/>
            <person name="Lin M."/>
            <person name="Madupu R."/>
            <person name="Crabtree J."/>
            <person name="Angiuoli S.V."/>
            <person name="Eisen J.A."/>
            <person name="Seshadri R."/>
            <person name="Ren Q."/>
            <person name="Wu M."/>
            <person name="Utterback T.R."/>
            <person name="Smith S."/>
            <person name="Lewis M."/>
            <person name="Khouri H."/>
            <person name="Zhang C."/>
            <person name="Niu H."/>
            <person name="Lin Q."/>
            <person name="Ohashi N."/>
            <person name="Zhi N."/>
            <person name="Nelson W.C."/>
            <person name="Brinkac L.M."/>
            <person name="Dodson R.J."/>
            <person name="Rosovitz M.J."/>
            <person name="Sundaram J.P."/>
            <person name="Daugherty S.C."/>
            <person name="Davidsen T."/>
            <person name="Durkin A.S."/>
            <person name="Gwinn M.L."/>
            <person name="Haft D.H."/>
            <person name="Selengut J.D."/>
            <person name="Sullivan S.A."/>
            <person name="Zafar N."/>
            <person name="Zhou L."/>
            <person name="Benahmed F."/>
            <person name="Forberger H."/>
            <person name="Halpin R."/>
            <person name="Mulligan S."/>
            <person name="Robinson J."/>
            <person name="White O."/>
            <person name="Rikihisa Y."/>
            <person name="Tettelin H."/>
        </authorList>
    </citation>
    <scope>NUCLEOTIDE SEQUENCE [LARGE SCALE GENOMIC DNA]</scope>
    <source>
        <strain>HZ</strain>
    </source>
</reference>
<keyword id="KW-0687">Ribonucleoprotein</keyword>
<keyword id="KW-0689">Ribosomal protein</keyword>
<keyword id="KW-0694">RNA-binding</keyword>
<keyword id="KW-0699">rRNA-binding</keyword>
<keyword id="KW-0820">tRNA-binding</keyword>
<feature type="chain" id="PRO_0000306559" description="Small ribosomal subunit protein uS13">
    <location>
        <begin position="1"/>
        <end position="123"/>
    </location>
</feature>
<feature type="region of interest" description="Disordered" evidence="2">
    <location>
        <begin position="99"/>
        <end position="123"/>
    </location>
</feature>
<feature type="compositionally biased region" description="Basic residues" evidence="2">
    <location>
        <begin position="99"/>
        <end position="113"/>
    </location>
</feature>
<accession>Q2GL38</accession>
<comment type="function">
    <text evidence="1">Located at the top of the head of the 30S subunit, it contacts several helices of the 16S rRNA. In the 70S ribosome it contacts the 23S rRNA (bridge B1a) and protein L5 of the 50S subunit (bridge B1b), connecting the 2 subunits; these bridges are implicated in subunit movement. Contacts the tRNAs in the A and P-sites.</text>
</comment>
<comment type="subunit">
    <text evidence="1">Part of the 30S ribosomal subunit. Forms a loose heterodimer with protein S19. Forms two bridges to the 50S subunit in the 70S ribosome.</text>
</comment>
<comment type="similarity">
    <text evidence="1">Belongs to the universal ribosomal protein uS13 family.</text>
</comment>
<sequence>MARIGGVNVPVDKRVVVALTYIYGIGTSLANRICEGCGIDKNVRVSALSEEDVVKIRNFIRAGCVVEADLRKEVAMNIKFLMDIGCYRGLRHRKKLPVRGQRTHTNARTRKGGSRLAVAAKKK</sequence>